<keyword id="KW-0067">ATP-binding</keyword>
<keyword id="KW-0173">Coenzyme A biosynthesis</keyword>
<keyword id="KW-0963">Cytoplasm</keyword>
<keyword id="KW-0418">Kinase</keyword>
<keyword id="KW-0547">Nucleotide-binding</keyword>
<keyword id="KW-0630">Potassium</keyword>
<keyword id="KW-1185">Reference proteome</keyword>
<keyword id="KW-0808">Transferase</keyword>
<evidence type="ECO:0000255" key="1">
    <source>
        <dbReference type="HAMAP-Rule" id="MF_01274"/>
    </source>
</evidence>
<accession>Q3SLJ6</accession>
<gene>
    <name evidence="1" type="primary">coaX</name>
    <name type="ordered locus">Tbd_0461</name>
</gene>
<organism>
    <name type="scientific">Thiobacillus denitrificans (strain ATCC 25259 / T1)</name>
    <dbReference type="NCBI Taxonomy" id="292415"/>
    <lineage>
        <taxon>Bacteria</taxon>
        <taxon>Pseudomonadati</taxon>
        <taxon>Pseudomonadota</taxon>
        <taxon>Betaproteobacteria</taxon>
        <taxon>Nitrosomonadales</taxon>
        <taxon>Thiobacillaceae</taxon>
        <taxon>Thiobacillus</taxon>
    </lineage>
</organism>
<feature type="chain" id="PRO_0000270906" description="Type III pantothenate kinase">
    <location>
        <begin position="1"/>
        <end position="244"/>
    </location>
</feature>
<feature type="active site" description="Proton acceptor" evidence="1">
    <location>
        <position position="99"/>
    </location>
</feature>
<feature type="binding site" evidence="1">
    <location>
        <begin position="9"/>
        <end position="16"/>
    </location>
    <ligand>
        <name>ATP</name>
        <dbReference type="ChEBI" id="CHEBI:30616"/>
    </ligand>
</feature>
<feature type="binding site" evidence="1">
    <location>
        <position position="90"/>
    </location>
    <ligand>
        <name>substrate</name>
    </ligand>
</feature>
<feature type="binding site" evidence="1">
    <location>
        <begin position="97"/>
        <end position="100"/>
    </location>
    <ligand>
        <name>substrate</name>
    </ligand>
</feature>
<feature type="binding site" evidence="1">
    <location>
        <position position="122"/>
    </location>
    <ligand>
        <name>ATP</name>
        <dbReference type="ChEBI" id="CHEBI:30616"/>
    </ligand>
</feature>
<feature type="binding site" evidence="1">
    <location>
        <position position="172"/>
    </location>
    <ligand>
        <name>substrate</name>
    </ligand>
</feature>
<dbReference type="EC" id="2.7.1.33" evidence="1"/>
<dbReference type="EMBL" id="CP000116">
    <property type="protein sequence ID" value="AAZ96414.1"/>
    <property type="molecule type" value="Genomic_DNA"/>
</dbReference>
<dbReference type="RefSeq" id="WP_011310973.1">
    <property type="nucleotide sequence ID" value="NC_007404.1"/>
</dbReference>
<dbReference type="SMR" id="Q3SLJ6"/>
<dbReference type="STRING" id="292415.Tbd_0461"/>
<dbReference type="KEGG" id="tbd:Tbd_0461"/>
<dbReference type="eggNOG" id="COG1521">
    <property type="taxonomic scope" value="Bacteria"/>
</dbReference>
<dbReference type="HOGENOM" id="CLU_066627_0_1_4"/>
<dbReference type="OrthoDB" id="9781305at2"/>
<dbReference type="UniPathway" id="UPA00241">
    <property type="reaction ID" value="UER00352"/>
</dbReference>
<dbReference type="Proteomes" id="UP000008291">
    <property type="component" value="Chromosome"/>
</dbReference>
<dbReference type="GO" id="GO:0005737">
    <property type="term" value="C:cytoplasm"/>
    <property type="evidence" value="ECO:0007669"/>
    <property type="project" value="UniProtKB-SubCell"/>
</dbReference>
<dbReference type="GO" id="GO:0005524">
    <property type="term" value="F:ATP binding"/>
    <property type="evidence" value="ECO:0007669"/>
    <property type="project" value="UniProtKB-UniRule"/>
</dbReference>
<dbReference type="GO" id="GO:0004594">
    <property type="term" value="F:pantothenate kinase activity"/>
    <property type="evidence" value="ECO:0007669"/>
    <property type="project" value="UniProtKB-UniRule"/>
</dbReference>
<dbReference type="GO" id="GO:0015937">
    <property type="term" value="P:coenzyme A biosynthetic process"/>
    <property type="evidence" value="ECO:0007669"/>
    <property type="project" value="UniProtKB-UniRule"/>
</dbReference>
<dbReference type="CDD" id="cd24015">
    <property type="entry name" value="ASKHA_NBD_PanK-III"/>
    <property type="match status" value="1"/>
</dbReference>
<dbReference type="Gene3D" id="3.30.420.40">
    <property type="match status" value="2"/>
</dbReference>
<dbReference type="HAMAP" id="MF_01274">
    <property type="entry name" value="Pantothen_kinase_3"/>
    <property type="match status" value="1"/>
</dbReference>
<dbReference type="InterPro" id="IPR043129">
    <property type="entry name" value="ATPase_NBD"/>
</dbReference>
<dbReference type="InterPro" id="IPR004619">
    <property type="entry name" value="Type_III_PanK"/>
</dbReference>
<dbReference type="NCBIfam" id="TIGR00671">
    <property type="entry name" value="baf"/>
    <property type="match status" value="1"/>
</dbReference>
<dbReference type="PANTHER" id="PTHR34265">
    <property type="entry name" value="TYPE III PANTOTHENATE KINASE"/>
    <property type="match status" value="1"/>
</dbReference>
<dbReference type="PANTHER" id="PTHR34265:SF1">
    <property type="entry name" value="TYPE III PANTOTHENATE KINASE"/>
    <property type="match status" value="1"/>
</dbReference>
<dbReference type="Pfam" id="PF03309">
    <property type="entry name" value="Pan_kinase"/>
    <property type="match status" value="1"/>
</dbReference>
<dbReference type="SUPFAM" id="SSF53067">
    <property type="entry name" value="Actin-like ATPase domain"/>
    <property type="match status" value="2"/>
</dbReference>
<protein>
    <recommendedName>
        <fullName evidence="1">Type III pantothenate kinase</fullName>
        <ecNumber evidence="1">2.7.1.33</ecNumber>
    </recommendedName>
    <alternativeName>
        <fullName evidence="1">PanK-III</fullName>
    </alternativeName>
    <alternativeName>
        <fullName evidence="1">Pantothenic acid kinase</fullName>
    </alternativeName>
</protein>
<proteinExistence type="inferred from homology"/>
<comment type="function">
    <text evidence="1">Catalyzes the phosphorylation of pantothenate (Pan), the first step in CoA biosynthesis.</text>
</comment>
<comment type="catalytic activity">
    <reaction evidence="1">
        <text>(R)-pantothenate + ATP = (R)-4'-phosphopantothenate + ADP + H(+)</text>
        <dbReference type="Rhea" id="RHEA:16373"/>
        <dbReference type="ChEBI" id="CHEBI:10986"/>
        <dbReference type="ChEBI" id="CHEBI:15378"/>
        <dbReference type="ChEBI" id="CHEBI:29032"/>
        <dbReference type="ChEBI" id="CHEBI:30616"/>
        <dbReference type="ChEBI" id="CHEBI:456216"/>
        <dbReference type="EC" id="2.7.1.33"/>
    </reaction>
</comment>
<comment type="cofactor">
    <cofactor evidence="1">
        <name>NH4(+)</name>
        <dbReference type="ChEBI" id="CHEBI:28938"/>
    </cofactor>
    <cofactor evidence="1">
        <name>K(+)</name>
        <dbReference type="ChEBI" id="CHEBI:29103"/>
    </cofactor>
    <text evidence="1">A monovalent cation. Ammonium or potassium.</text>
</comment>
<comment type="pathway">
    <text evidence="1">Cofactor biosynthesis; coenzyme A biosynthesis; CoA from (R)-pantothenate: step 1/5.</text>
</comment>
<comment type="subunit">
    <text evidence="1">Homodimer.</text>
</comment>
<comment type="subcellular location">
    <subcellularLocation>
        <location evidence="1">Cytoplasm</location>
    </subcellularLocation>
</comment>
<comment type="similarity">
    <text evidence="1">Belongs to the type III pantothenate kinase family.</text>
</comment>
<sequence>MSGCRILLDAGNSSLKWAVVEDGTWLARGRSDYSDLSAVEAELDAGSECFIASVASRVYEEKLAALLTAAGCSAVWLKSEAAFDDVTNDYRDPTQLGVDRWMGLVAARARRRAPTLVVSAGTAMTVDALSGDGSFLGGLIVPGVALMQRSLQQGTAGGAAAGGAWQAFPRCTADAAYSGIIAALCGAVEGQHVRLAAHEGISPACLITGGGAETLLPHLGVDAEHVPTLVLEGIERVARAGGRG</sequence>
<reference key="1">
    <citation type="journal article" date="2006" name="J. Bacteriol.">
        <title>The genome sequence of the obligately chemolithoautotrophic, facultatively anaerobic bacterium Thiobacillus denitrificans.</title>
        <authorList>
            <person name="Beller H.R."/>
            <person name="Chain P.S."/>
            <person name="Letain T.E."/>
            <person name="Chakicherla A."/>
            <person name="Larimer F.W."/>
            <person name="Richardson P.M."/>
            <person name="Coleman M.A."/>
            <person name="Wood A.P."/>
            <person name="Kelly D.P."/>
        </authorList>
    </citation>
    <scope>NUCLEOTIDE SEQUENCE [LARGE SCALE GENOMIC DNA]</scope>
    <source>
        <strain>ATCC 25259 / T1</strain>
    </source>
</reference>
<name>COAX_THIDA</name>